<name>GLMM_BRASB</name>
<feature type="chain" id="PRO_0000301284" description="Phosphoglucosamine mutase">
    <location>
        <begin position="1"/>
        <end position="449"/>
    </location>
</feature>
<feature type="active site" description="Phosphoserine intermediate" evidence="1">
    <location>
        <position position="101"/>
    </location>
</feature>
<feature type="binding site" description="via phosphate group" evidence="1">
    <location>
        <position position="101"/>
    </location>
    <ligand>
        <name>Mg(2+)</name>
        <dbReference type="ChEBI" id="CHEBI:18420"/>
    </ligand>
</feature>
<feature type="binding site" evidence="1">
    <location>
        <position position="242"/>
    </location>
    <ligand>
        <name>Mg(2+)</name>
        <dbReference type="ChEBI" id="CHEBI:18420"/>
    </ligand>
</feature>
<feature type="binding site" evidence="1">
    <location>
        <position position="244"/>
    </location>
    <ligand>
        <name>Mg(2+)</name>
        <dbReference type="ChEBI" id="CHEBI:18420"/>
    </ligand>
</feature>
<feature type="binding site" evidence="1">
    <location>
        <position position="246"/>
    </location>
    <ligand>
        <name>Mg(2+)</name>
        <dbReference type="ChEBI" id="CHEBI:18420"/>
    </ligand>
</feature>
<feature type="modified residue" description="Phosphoserine" evidence="1">
    <location>
        <position position="101"/>
    </location>
</feature>
<evidence type="ECO:0000255" key="1">
    <source>
        <dbReference type="HAMAP-Rule" id="MF_01554"/>
    </source>
</evidence>
<sequence length="449" mass="48620">MSRNYFGTDGIRGRANGLITPELALKVGQAAGLLFQRGEHRHRVVIGKDTRLSGYMIEYAMVAGFTSVGMDVLLVGPMPTPAVAMLTKSMRADLGVMISASHNLFEDNGIKLFGPQGFKLSDDVEKQIEQLLDESLDKKLAQSASLGRARRIDGVHDRYIEFAKRTLPRDLSLDGLRVVVDCANGAAYKVVPEALWELGADVISIGVEPDGFNINKECGSTSPEALCRKVREMRADIGIALDGDADRVILVDERGHIVDGDQLLAVIAQSWKEDGRLARPGIVATVMSNLGLERFLQGQGLELVRTPVGDRYVLERMLADGYNLGGEQSGHIILSDYATTGDGFVAALQVLATVQRLRRPVSEVCHKFDPLPQILKNVRYRSGKPLDADAVKSAIDTGQKRLNGHGRLLVRSSGTEPVIRVMGEGDDRDLVEEVVDDIVTAVGNAAAAA</sequence>
<keyword id="KW-0413">Isomerase</keyword>
<keyword id="KW-0460">Magnesium</keyword>
<keyword id="KW-0479">Metal-binding</keyword>
<keyword id="KW-0597">Phosphoprotein</keyword>
<keyword id="KW-1185">Reference proteome</keyword>
<comment type="function">
    <text evidence="1">Catalyzes the conversion of glucosamine-6-phosphate to glucosamine-1-phosphate.</text>
</comment>
<comment type="catalytic activity">
    <reaction evidence="1">
        <text>alpha-D-glucosamine 1-phosphate = D-glucosamine 6-phosphate</text>
        <dbReference type="Rhea" id="RHEA:23424"/>
        <dbReference type="ChEBI" id="CHEBI:58516"/>
        <dbReference type="ChEBI" id="CHEBI:58725"/>
        <dbReference type="EC" id="5.4.2.10"/>
    </reaction>
</comment>
<comment type="cofactor">
    <cofactor evidence="1">
        <name>Mg(2+)</name>
        <dbReference type="ChEBI" id="CHEBI:18420"/>
    </cofactor>
    <text evidence="1">Binds 1 Mg(2+) ion per subunit.</text>
</comment>
<comment type="PTM">
    <text evidence="1">Activated by phosphorylation.</text>
</comment>
<comment type="similarity">
    <text evidence="1">Belongs to the phosphohexose mutase family.</text>
</comment>
<proteinExistence type="inferred from homology"/>
<accession>A5ECX6</accession>
<gene>
    <name evidence="1" type="primary">glmM</name>
    <name type="ordered locus">BBta_1817</name>
</gene>
<protein>
    <recommendedName>
        <fullName evidence="1">Phosphoglucosamine mutase</fullName>
        <ecNumber evidence="1">5.4.2.10</ecNumber>
    </recommendedName>
</protein>
<reference key="1">
    <citation type="journal article" date="2007" name="Science">
        <title>Legumes symbioses: absence of nod genes in photosynthetic bradyrhizobia.</title>
        <authorList>
            <person name="Giraud E."/>
            <person name="Moulin L."/>
            <person name="Vallenet D."/>
            <person name="Barbe V."/>
            <person name="Cytryn E."/>
            <person name="Avarre J.-C."/>
            <person name="Jaubert M."/>
            <person name="Simon D."/>
            <person name="Cartieaux F."/>
            <person name="Prin Y."/>
            <person name="Bena G."/>
            <person name="Hannibal L."/>
            <person name="Fardoux J."/>
            <person name="Kojadinovic M."/>
            <person name="Vuillet L."/>
            <person name="Lajus A."/>
            <person name="Cruveiller S."/>
            <person name="Rouy Z."/>
            <person name="Mangenot S."/>
            <person name="Segurens B."/>
            <person name="Dossat C."/>
            <person name="Franck W.L."/>
            <person name="Chang W.-S."/>
            <person name="Saunders E."/>
            <person name="Bruce D."/>
            <person name="Richardson P."/>
            <person name="Normand P."/>
            <person name="Dreyfus B."/>
            <person name="Pignol D."/>
            <person name="Stacey G."/>
            <person name="Emerich D."/>
            <person name="Vermeglio A."/>
            <person name="Medigue C."/>
            <person name="Sadowsky M."/>
        </authorList>
    </citation>
    <scope>NUCLEOTIDE SEQUENCE [LARGE SCALE GENOMIC DNA]</scope>
    <source>
        <strain>BTAi1 / ATCC BAA-1182</strain>
    </source>
</reference>
<dbReference type="EC" id="5.4.2.10" evidence="1"/>
<dbReference type="EMBL" id="CP000494">
    <property type="protein sequence ID" value="ABQ34020.1"/>
    <property type="molecule type" value="Genomic_DNA"/>
</dbReference>
<dbReference type="RefSeq" id="WP_012042050.1">
    <property type="nucleotide sequence ID" value="NC_009485.1"/>
</dbReference>
<dbReference type="SMR" id="A5ECX6"/>
<dbReference type="STRING" id="288000.BBta_1817"/>
<dbReference type="KEGG" id="bbt:BBta_1817"/>
<dbReference type="eggNOG" id="COG1109">
    <property type="taxonomic scope" value="Bacteria"/>
</dbReference>
<dbReference type="HOGENOM" id="CLU_016950_7_0_5"/>
<dbReference type="OrthoDB" id="9803322at2"/>
<dbReference type="Proteomes" id="UP000000246">
    <property type="component" value="Chromosome"/>
</dbReference>
<dbReference type="GO" id="GO:0005829">
    <property type="term" value="C:cytosol"/>
    <property type="evidence" value="ECO:0007669"/>
    <property type="project" value="TreeGrafter"/>
</dbReference>
<dbReference type="GO" id="GO:0000287">
    <property type="term" value="F:magnesium ion binding"/>
    <property type="evidence" value="ECO:0007669"/>
    <property type="project" value="UniProtKB-UniRule"/>
</dbReference>
<dbReference type="GO" id="GO:0008966">
    <property type="term" value="F:phosphoglucosamine mutase activity"/>
    <property type="evidence" value="ECO:0007669"/>
    <property type="project" value="UniProtKB-UniRule"/>
</dbReference>
<dbReference type="GO" id="GO:0004615">
    <property type="term" value="F:phosphomannomutase activity"/>
    <property type="evidence" value="ECO:0007669"/>
    <property type="project" value="TreeGrafter"/>
</dbReference>
<dbReference type="GO" id="GO:0005975">
    <property type="term" value="P:carbohydrate metabolic process"/>
    <property type="evidence" value="ECO:0007669"/>
    <property type="project" value="InterPro"/>
</dbReference>
<dbReference type="GO" id="GO:0009252">
    <property type="term" value="P:peptidoglycan biosynthetic process"/>
    <property type="evidence" value="ECO:0007669"/>
    <property type="project" value="TreeGrafter"/>
</dbReference>
<dbReference type="GO" id="GO:0006048">
    <property type="term" value="P:UDP-N-acetylglucosamine biosynthetic process"/>
    <property type="evidence" value="ECO:0007669"/>
    <property type="project" value="TreeGrafter"/>
</dbReference>
<dbReference type="CDD" id="cd05802">
    <property type="entry name" value="GlmM"/>
    <property type="match status" value="1"/>
</dbReference>
<dbReference type="FunFam" id="3.30.310.50:FF:000001">
    <property type="entry name" value="Phosphoglucosamine mutase"/>
    <property type="match status" value="1"/>
</dbReference>
<dbReference type="FunFam" id="3.40.120.10:FF:000001">
    <property type="entry name" value="Phosphoglucosamine mutase"/>
    <property type="match status" value="1"/>
</dbReference>
<dbReference type="FunFam" id="3.40.120.10:FF:000003">
    <property type="entry name" value="Phosphoglucosamine mutase"/>
    <property type="match status" value="1"/>
</dbReference>
<dbReference type="Gene3D" id="3.40.120.10">
    <property type="entry name" value="Alpha-D-Glucose-1,6-Bisphosphate, subunit A, domain 3"/>
    <property type="match status" value="3"/>
</dbReference>
<dbReference type="Gene3D" id="3.30.310.50">
    <property type="entry name" value="Alpha-D-phosphohexomutase, C-terminal domain"/>
    <property type="match status" value="1"/>
</dbReference>
<dbReference type="HAMAP" id="MF_01554_B">
    <property type="entry name" value="GlmM_B"/>
    <property type="match status" value="1"/>
</dbReference>
<dbReference type="InterPro" id="IPR005844">
    <property type="entry name" value="A-D-PHexomutase_a/b/a-I"/>
</dbReference>
<dbReference type="InterPro" id="IPR016055">
    <property type="entry name" value="A-D-PHexomutase_a/b/a-I/II/III"/>
</dbReference>
<dbReference type="InterPro" id="IPR005845">
    <property type="entry name" value="A-D-PHexomutase_a/b/a-II"/>
</dbReference>
<dbReference type="InterPro" id="IPR005846">
    <property type="entry name" value="A-D-PHexomutase_a/b/a-III"/>
</dbReference>
<dbReference type="InterPro" id="IPR005843">
    <property type="entry name" value="A-D-PHexomutase_C"/>
</dbReference>
<dbReference type="InterPro" id="IPR036900">
    <property type="entry name" value="A-D-PHexomutase_C_sf"/>
</dbReference>
<dbReference type="InterPro" id="IPR005841">
    <property type="entry name" value="Alpha-D-phosphohexomutase_SF"/>
</dbReference>
<dbReference type="InterPro" id="IPR006352">
    <property type="entry name" value="GlmM_bact"/>
</dbReference>
<dbReference type="InterPro" id="IPR050060">
    <property type="entry name" value="Phosphoglucosamine_mutase"/>
</dbReference>
<dbReference type="NCBIfam" id="TIGR01455">
    <property type="entry name" value="glmM"/>
    <property type="match status" value="1"/>
</dbReference>
<dbReference type="NCBIfam" id="NF008139">
    <property type="entry name" value="PRK10887.1"/>
    <property type="match status" value="1"/>
</dbReference>
<dbReference type="PANTHER" id="PTHR42946:SF1">
    <property type="entry name" value="PHOSPHOGLUCOMUTASE (ALPHA-D-GLUCOSE-1,6-BISPHOSPHATE-DEPENDENT)"/>
    <property type="match status" value="1"/>
</dbReference>
<dbReference type="PANTHER" id="PTHR42946">
    <property type="entry name" value="PHOSPHOHEXOSE MUTASE"/>
    <property type="match status" value="1"/>
</dbReference>
<dbReference type="Pfam" id="PF02878">
    <property type="entry name" value="PGM_PMM_I"/>
    <property type="match status" value="1"/>
</dbReference>
<dbReference type="Pfam" id="PF02879">
    <property type="entry name" value="PGM_PMM_II"/>
    <property type="match status" value="1"/>
</dbReference>
<dbReference type="Pfam" id="PF02880">
    <property type="entry name" value="PGM_PMM_III"/>
    <property type="match status" value="1"/>
</dbReference>
<dbReference type="Pfam" id="PF00408">
    <property type="entry name" value="PGM_PMM_IV"/>
    <property type="match status" value="1"/>
</dbReference>
<dbReference type="PRINTS" id="PR00509">
    <property type="entry name" value="PGMPMM"/>
</dbReference>
<dbReference type="SUPFAM" id="SSF55957">
    <property type="entry name" value="Phosphoglucomutase, C-terminal domain"/>
    <property type="match status" value="1"/>
</dbReference>
<dbReference type="SUPFAM" id="SSF53738">
    <property type="entry name" value="Phosphoglucomutase, first 3 domains"/>
    <property type="match status" value="3"/>
</dbReference>
<organism>
    <name type="scientific">Bradyrhizobium sp. (strain BTAi1 / ATCC BAA-1182)</name>
    <dbReference type="NCBI Taxonomy" id="288000"/>
    <lineage>
        <taxon>Bacteria</taxon>
        <taxon>Pseudomonadati</taxon>
        <taxon>Pseudomonadota</taxon>
        <taxon>Alphaproteobacteria</taxon>
        <taxon>Hyphomicrobiales</taxon>
        <taxon>Nitrobacteraceae</taxon>
        <taxon>Bradyrhizobium</taxon>
    </lineage>
</organism>